<protein>
    <recommendedName>
        <fullName>High-affinity zinc uptake system protein ZnuA</fullName>
    </recommendedName>
</protein>
<organism>
    <name type="scientific">Brucella melitensis biotype 1 (strain ATCC 23456 / CCUG 17765 / NCTC 10094 / 16M)</name>
    <dbReference type="NCBI Taxonomy" id="224914"/>
    <lineage>
        <taxon>Bacteria</taxon>
        <taxon>Pseudomonadati</taxon>
        <taxon>Pseudomonadota</taxon>
        <taxon>Alphaproteobacteria</taxon>
        <taxon>Hyphomicrobiales</taxon>
        <taxon>Brucellaceae</taxon>
        <taxon>Brucella/Ochrobactrum group</taxon>
        <taxon>Brucella</taxon>
    </lineage>
</organism>
<comment type="function">
    <text evidence="3">Part of the ATP-binding cassette (ABC) system ZnuABC involved in zinc import (By similarity). Binds zinc with high affinity and specificity and delivers it to the membrane permease for translocation into the cytoplasm (By similarity). Required for survival and normal growth under low Zn (2+) concentrations (By similarity). Also required for virulence and intracellular growth in host cells (By similarity).</text>
</comment>
<comment type="subcellular location">
    <subcellularLocation>
        <location evidence="1">Periplasm</location>
    </subcellularLocation>
</comment>
<comment type="similarity">
    <text evidence="6">Belongs to the bacterial solute-binding protein 9 family.</text>
</comment>
<comment type="sequence caution" evidence="6">
    <conflict type="erroneous initiation">
        <sequence resource="EMBL-CDS" id="AAL53419"/>
    </conflict>
</comment>
<evidence type="ECO:0000250" key="1">
    <source>
        <dbReference type="UniProtKB" id="A1B9L0"/>
    </source>
</evidence>
<evidence type="ECO:0000250" key="2">
    <source>
        <dbReference type="UniProtKB" id="P39172"/>
    </source>
</evidence>
<evidence type="ECO:0000250" key="3">
    <source>
        <dbReference type="UniProtKB" id="Q576K1"/>
    </source>
</evidence>
<evidence type="ECO:0000255" key="4"/>
<evidence type="ECO:0000256" key="5">
    <source>
        <dbReference type="SAM" id="MobiDB-lite"/>
    </source>
</evidence>
<evidence type="ECO:0000305" key="6"/>
<proteinExistence type="inferred from homology"/>
<feature type="signal peptide" evidence="4">
    <location>
        <begin position="1"/>
        <end position="23"/>
    </location>
</feature>
<feature type="chain" id="PRO_0000248945" description="High-affinity zinc uptake system protein ZnuA">
    <location>
        <begin position="24"/>
        <end position="334"/>
    </location>
</feature>
<feature type="region of interest" description="Disordered" evidence="5">
    <location>
        <begin position="120"/>
        <end position="147"/>
    </location>
</feature>
<feature type="binding site" evidence="2">
    <location>
        <position position="60"/>
    </location>
    <ligand>
        <name>Zn(2+)</name>
        <dbReference type="ChEBI" id="CHEBI:29105"/>
    </ligand>
</feature>
<feature type="binding site" evidence="2">
    <location>
        <position position="61"/>
    </location>
    <ligand>
        <name>Zn(2+)</name>
        <dbReference type="ChEBI" id="CHEBI:29105"/>
    </ligand>
</feature>
<feature type="binding site" evidence="2">
    <location>
        <position position="168"/>
    </location>
    <ligand>
        <name>Zn(2+)</name>
        <dbReference type="ChEBI" id="CHEBI:29105"/>
    </ligand>
</feature>
<feature type="binding site" evidence="2">
    <location>
        <position position="232"/>
    </location>
    <ligand>
        <name>Zn(2+)</name>
        <dbReference type="ChEBI" id="CHEBI:29105"/>
    </ligand>
</feature>
<feature type="disulfide bond" evidence="2">
    <location>
        <begin position="277"/>
        <end position="331"/>
    </location>
</feature>
<gene>
    <name type="primary">znuA</name>
    <name type="ordered locus">BMEII0178</name>
</gene>
<name>ZNUA_BRUME</name>
<accession>Q8YDJ7</accession>
<keyword id="KW-1015">Disulfide bond</keyword>
<keyword id="KW-0406">Ion transport</keyword>
<keyword id="KW-0479">Metal-binding</keyword>
<keyword id="KW-0574">Periplasm</keyword>
<keyword id="KW-0732">Signal</keyword>
<keyword id="KW-0813">Transport</keyword>
<keyword id="KW-0843">Virulence</keyword>
<keyword id="KW-0862">Zinc</keyword>
<keyword id="KW-0864">Zinc transport</keyword>
<dbReference type="EMBL" id="AE008918">
    <property type="protein sequence ID" value="AAL53419.1"/>
    <property type="status" value="ALT_INIT"/>
    <property type="molecule type" value="Genomic_DNA"/>
</dbReference>
<dbReference type="PIR" id="AH3531">
    <property type="entry name" value="AH3531"/>
</dbReference>
<dbReference type="RefSeq" id="WP_004680953.1">
    <property type="nucleotide sequence ID" value="NZ_GG703779.1"/>
</dbReference>
<dbReference type="SMR" id="Q8YDJ7"/>
<dbReference type="GeneID" id="97535843"/>
<dbReference type="KEGG" id="bme:BMEII0178"/>
<dbReference type="KEGG" id="bmel:DK63_3069"/>
<dbReference type="PATRIC" id="fig|224914.52.peg.3211"/>
<dbReference type="eggNOG" id="COG4531">
    <property type="taxonomic scope" value="Bacteria"/>
</dbReference>
<dbReference type="PhylomeDB" id="Q8YDJ7"/>
<dbReference type="PRO" id="PR:Q8YDJ7"/>
<dbReference type="Proteomes" id="UP000000419">
    <property type="component" value="Chromosome II"/>
</dbReference>
<dbReference type="GO" id="GO:0042597">
    <property type="term" value="C:periplasmic space"/>
    <property type="evidence" value="ECO:0007669"/>
    <property type="project" value="UniProtKB-SubCell"/>
</dbReference>
<dbReference type="GO" id="GO:0046872">
    <property type="term" value="F:metal ion binding"/>
    <property type="evidence" value="ECO:0007669"/>
    <property type="project" value="UniProtKB-KW"/>
</dbReference>
<dbReference type="GO" id="GO:0006829">
    <property type="term" value="P:zinc ion transport"/>
    <property type="evidence" value="ECO:0007669"/>
    <property type="project" value="UniProtKB-KW"/>
</dbReference>
<dbReference type="CDD" id="cd01019">
    <property type="entry name" value="ZnuA"/>
    <property type="match status" value="1"/>
</dbReference>
<dbReference type="Gene3D" id="3.40.50.1980">
    <property type="entry name" value="Nitrogenase molybdenum iron protein domain"/>
    <property type="match status" value="2"/>
</dbReference>
<dbReference type="InterPro" id="IPR050492">
    <property type="entry name" value="Bact_metal-bind_prot9"/>
</dbReference>
<dbReference type="InterPro" id="IPR035520">
    <property type="entry name" value="ZnuA"/>
</dbReference>
<dbReference type="InterPro" id="IPR006127">
    <property type="entry name" value="ZnuA-like"/>
</dbReference>
<dbReference type="NCBIfam" id="NF007091">
    <property type="entry name" value="PRK09545.1"/>
    <property type="match status" value="1"/>
</dbReference>
<dbReference type="PANTHER" id="PTHR42953:SF3">
    <property type="entry name" value="HIGH-AFFINITY ZINC UPTAKE SYSTEM PROTEIN ZNUA"/>
    <property type="match status" value="1"/>
</dbReference>
<dbReference type="PANTHER" id="PTHR42953">
    <property type="entry name" value="HIGH-AFFINITY ZINC UPTAKE SYSTEM PROTEIN ZNUA-RELATED"/>
    <property type="match status" value="1"/>
</dbReference>
<dbReference type="Pfam" id="PF01297">
    <property type="entry name" value="ZnuA"/>
    <property type="match status" value="1"/>
</dbReference>
<dbReference type="SUPFAM" id="SSF53807">
    <property type="entry name" value="Helical backbone' metal receptor"/>
    <property type="match status" value="1"/>
</dbReference>
<sequence length="334" mass="36036">MKNLHSLFLASAFLAGFCGSSLAGEREGVVVSIKPLHSIVSAVMQGVGKPKLIVQGAGSEHVYSLKPSDAEAIEHAKVIFWAGPSMETFLDKPIDTLGEGAKVVALGDAKGLTKLKFREGGPFEAHDHGHGGSHEEEHDAHGSGDHDHAAEVAEEGHEHHHHGEYDLHFWLDPQNGKILAADIAKTLGESDPEHAAQYEKNAKAYGEKLDALTREVAAELKPVKDKPFIVFHDAYQYFENRFGMKAAGSITVSPEKAPGAARIQQIHDKIKSLGATCVFSEPQFEPKLVKTVVDGTKARTGVLDPLGAELKDGPDLYPQLIRNLANSLKDCLSK</sequence>
<reference key="1">
    <citation type="journal article" date="2002" name="Proc. Natl. Acad. Sci. U.S.A.">
        <title>The genome sequence of the facultative intracellular pathogen Brucella melitensis.</title>
        <authorList>
            <person name="DelVecchio V.G."/>
            <person name="Kapatral V."/>
            <person name="Redkar R.J."/>
            <person name="Patra G."/>
            <person name="Mujer C."/>
            <person name="Los T."/>
            <person name="Ivanova N."/>
            <person name="Anderson I."/>
            <person name="Bhattacharyya A."/>
            <person name="Lykidis A."/>
            <person name="Reznik G."/>
            <person name="Jablonski L."/>
            <person name="Larsen N."/>
            <person name="D'Souza M."/>
            <person name="Bernal A."/>
            <person name="Mazur M."/>
            <person name="Goltsman E."/>
            <person name="Selkov E."/>
            <person name="Elzer P.H."/>
            <person name="Hagius S."/>
            <person name="O'Callaghan D."/>
            <person name="Letesson J.-J."/>
            <person name="Haselkorn R."/>
            <person name="Kyrpides N.C."/>
            <person name="Overbeek R."/>
        </authorList>
    </citation>
    <scope>NUCLEOTIDE SEQUENCE [LARGE SCALE GENOMIC DNA]</scope>
    <source>
        <strain>ATCC 23456 / CCUG 17765 / NCTC 10094 / 16M</strain>
    </source>
</reference>